<protein>
    <recommendedName>
        <fullName evidence="11 17">N-alpha-acetyltransferase 60</fullName>
        <shortName evidence="12 13">hNaa60</shortName>
        <ecNumber evidence="5">2.3.1.259</ecNumber>
    </recommendedName>
    <alternativeName>
        <fullName evidence="10">Histone acetyltransferase type B protein 4</fullName>
        <shortName evidence="10">HAT4</shortName>
        <ecNumber evidence="15">2.3.1.48</ecNumber>
    </alternativeName>
    <alternativeName>
        <fullName>N-acetyltransferase 15</fullName>
    </alternativeName>
    <alternativeName>
        <fullName>N-alpha-acetyltransferase F</fullName>
        <shortName>NatF</shortName>
    </alternativeName>
</protein>
<proteinExistence type="evidence at protein level"/>
<sequence>MTEVVPSSALSEVSLRLLCHDDIDTVKHLCGDWFPIEYPDSWYRDITSNKKFFSLAATYRGAIVGMIVAEIKNRTKIHKEDGDILASNFSVDTQVAYILSLGVVKEFRKHGIGSLLLESLKDHISTTAQDHCKAIYLHVLTTNNTAINFYENRDFKQHHYLPYYYSIRGVLKDGFTYVLYINGGHPPWTILDYIQHLGSALASLSPCSIPHRVYRQAHSLLCSFLPWSGISSKSGIEYSRTM</sequence>
<gene>
    <name evidence="11 17" type="primary">NAA60</name>
    <name evidence="10" type="synonym">HAT4</name>
    <name type="synonym">NAT15</name>
    <name type="ORF">UNQ2771/PRO7155</name>
</gene>
<organism>
    <name type="scientific">Homo sapiens</name>
    <name type="common">Human</name>
    <dbReference type="NCBI Taxonomy" id="9606"/>
    <lineage>
        <taxon>Eukaryota</taxon>
        <taxon>Metazoa</taxon>
        <taxon>Chordata</taxon>
        <taxon>Craniata</taxon>
        <taxon>Vertebrata</taxon>
        <taxon>Euteleostomi</taxon>
        <taxon>Mammalia</taxon>
        <taxon>Eutheria</taxon>
        <taxon>Euarchontoglires</taxon>
        <taxon>Primates</taxon>
        <taxon>Haplorrhini</taxon>
        <taxon>Catarrhini</taxon>
        <taxon>Hominidae</taxon>
        <taxon>Homo</taxon>
    </lineage>
</organism>
<keyword id="KW-0002">3D-structure</keyword>
<keyword id="KW-0007">Acetylation</keyword>
<keyword id="KW-0012">Acyltransferase</keyword>
<keyword id="KW-0877">Alternative promoter usage</keyword>
<keyword id="KW-0025">Alternative splicing</keyword>
<keyword id="KW-0156">Chromatin regulator</keyword>
<keyword id="KW-0159">Chromosome partition</keyword>
<keyword id="KW-0333">Golgi apparatus</keyword>
<keyword id="KW-0472">Membrane</keyword>
<keyword id="KW-1267">Proteomics identification</keyword>
<keyword id="KW-1185">Reference proteome</keyword>
<keyword id="KW-0808">Transferase</keyword>
<feature type="chain" id="PRO_0000321566" description="N-alpha-acetyltransferase 60">
    <location>
        <begin position="1"/>
        <end position="242"/>
    </location>
</feature>
<feature type="topological domain" description="Cytoplasmic" evidence="16">
    <location>
        <begin position="1"/>
        <end position="192"/>
    </location>
</feature>
<feature type="intramembrane region" description="Helical" evidence="16">
    <location>
        <begin position="193"/>
        <end position="236"/>
    </location>
</feature>
<feature type="topological domain" description="Cytoplasmic" evidence="16">
    <location>
        <begin position="237"/>
        <end position="242"/>
    </location>
</feature>
<feature type="domain" description="N-acetyltransferase" evidence="1">
    <location>
        <begin position="13"/>
        <end position="182"/>
    </location>
</feature>
<feature type="region of interest" description="Required for homodimerization" evidence="6">
    <location>
        <begin position="162"/>
        <end position="173"/>
    </location>
</feature>
<feature type="active site" evidence="6 7">
    <location>
        <position position="97"/>
    </location>
</feature>
<feature type="active site" evidence="6 7">
    <location>
        <position position="138"/>
    </location>
</feature>
<feature type="binding site" evidence="6 21 22">
    <location>
        <position position="38"/>
    </location>
    <ligand>
        <name>substrate</name>
    </ligand>
</feature>
<feature type="binding site" evidence="6 21 22">
    <location>
        <position position="99"/>
    </location>
    <ligand>
        <name>substrate</name>
    </ligand>
</feature>
<feature type="binding site" evidence="6 7 18 19 20 21 22">
    <location>
        <begin position="101"/>
        <end position="103"/>
    </location>
    <ligand>
        <name>acetyl-CoA</name>
        <dbReference type="ChEBI" id="CHEBI:57288"/>
    </ligand>
</feature>
<feature type="binding site" evidence="6 7 18 19 20 21 22">
    <location>
        <begin position="109"/>
        <end position="114"/>
    </location>
    <ligand>
        <name>acetyl-CoA</name>
        <dbReference type="ChEBI" id="CHEBI:57288"/>
    </ligand>
</feature>
<feature type="binding site" evidence="6 7 18 19 20 21 22">
    <location>
        <position position="143"/>
    </location>
    <ligand>
        <name>acetyl-CoA</name>
        <dbReference type="ChEBI" id="CHEBI:57288"/>
    </ligand>
</feature>
<feature type="binding site" evidence="6 7 18 19 20 21 22">
    <location>
        <begin position="150"/>
        <end position="153"/>
    </location>
    <ligand>
        <name>acetyl-CoA</name>
        <dbReference type="ChEBI" id="CHEBI:57288"/>
    </ligand>
</feature>
<feature type="binding site" evidence="6 21 22">
    <location>
        <position position="165"/>
    </location>
    <ligand>
        <name>substrate</name>
    </ligand>
</feature>
<feature type="site" description="Required to position thioacetyl group" evidence="7">
    <location>
        <position position="34"/>
    </location>
</feature>
<feature type="modified residue" description="N6-acetyllysine; by autocatalysis" evidence="4">
    <location>
        <position position="79"/>
    </location>
</feature>
<feature type="modified residue" description="N6-acetyllysine; by autocatalysis" evidence="4">
    <location>
        <position position="105"/>
    </location>
</feature>
<feature type="modified residue" description="N6-acetyllysine; by autocatalysis" evidence="15">
    <location>
        <position position="109"/>
    </location>
</feature>
<feature type="modified residue" description="N6-acetyllysine; by autocatalysis" evidence="15">
    <location>
        <position position="121"/>
    </location>
</feature>
<feature type="modified residue" description="N6-acetyllysine; by autocatalysis" evidence="4">
    <location>
        <position position="156"/>
    </location>
</feature>
<feature type="splice variant" id="VSP_044122" description="In isoform 3." evidence="9">
    <location>
        <begin position="1"/>
        <end position="65"/>
    </location>
</feature>
<feature type="splice variant" id="VSP_044123" description="In isoform 2." evidence="9">
    <original>MTEVVPSSALSEVSLRLLCHDDIDTVKHLCGDWFPI</original>
    <variation>MFPRRRTERRLGDTGTRKKIAYRKAVPGGRKCGASLSWEKSSR</variation>
    <location>
        <begin position="1"/>
        <end position="36"/>
    </location>
</feature>
<feature type="splice variant" id="VSP_044124" description="In isoform 4." evidence="9">
    <original>GSLLLESLKDHISTTAQDHCKAIYLHVLTTNNTAINFYENRDFKQHHYLPYYYSIRGVLKDGFTYVLYINGGHPPWTILDYIQHLGSALASLSPCSIPHRVYRQAHSLLCSFLPWSGISSKSGIEYSRTM</original>
    <variation>ESTARPTACSAASCHGRASLPRVASSTAGPCDVGWAAATRPHPSAARRARLPVHLTPSVFCKELPAI</variation>
    <location>
        <begin position="113"/>
        <end position="242"/>
    </location>
</feature>
<feature type="splice variant" id="VSP_044125" description="In isoform 5." evidence="9">
    <original>GSLLLESLKDHISTTAQDHCKAIYLHVLTTNNTAINFYENRDFKQHHYLPYYYSIRGVLKDGFTYVLYINGGHPPWTILDYIQHLGSALASLSPCSIPHRVYRQAHSLLCSFLPWSGISSKSGIEYSRTM</original>
    <variation>EPHGLHPAPGLCTSQPEPLLHSAQSLPPGPQPALQLPAMVGHLFQEWHRVQPDHVMSAGQPPPGPTLRPPAEPAFLSI</variation>
    <location>
        <begin position="113"/>
        <end position="242"/>
    </location>
</feature>
<feature type="sequence variant" id="VAR_089549" description="In IBGC9; uncertain significance; when transfected RPE-1 cells, does not affect subcellular localization to the Golgi apparatus." evidence="8">
    <original>L</original>
    <variation>R</variation>
    <location>
        <position position="17"/>
    </location>
</feature>
<feature type="sequence variant" id="VAR_089550" description="In IBGC9; uncertain significance; decreased activity of N-terminal protein amino acid acetylation; when transfected RPE-1 cells, does not affect subcellular localization to the Golgi apparatus." evidence="8">
    <original>R</original>
    <variation>C</variation>
    <location>
        <position position="44"/>
    </location>
</feature>
<feature type="sequence variant" id="VAR_089551" description="In IBGC9; uncertain significance; decreased activity of N-terminal protein amino acid acetylation; when transfected RPE-1 cells, does not affect subcellular localization to the Golgi apparatus." evidence="8">
    <original>H</original>
    <variation>Y</variation>
    <location>
        <position position="131"/>
    </location>
</feature>
<feature type="sequence variant" id="VAR_089552" description="In IBGC9; uncertain significance; may strongly decrease protein expression levels; when transfected RPE-1 cells, does not affect subcellular localization to the Golgi apparatus." evidence="8">
    <original>N</original>
    <variation>T</variation>
    <location>
        <position position="143"/>
    </location>
</feature>
<feature type="sequence variant" id="VAR_060995" description="In dbSNP:rs34464545.">
    <original>H</original>
    <variation>Q</variation>
    <location>
        <position position="218"/>
    </location>
</feature>
<feature type="mutagenesis site" description="Does not affect localization to the Golgi apparatus; when associated with S-30; S-132; S-207 and S-222." evidence="5">
    <original>C</original>
    <variation>S</variation>
    <location>
        <position position="19"/>
    </location>
</feature>
<feature type="mutagenesis site" description="Does not affect localization to the Golgi apparatus; when associated with S-19; S-132; S-207 and S-222." evidence="5">
    <original>C</original>
    <variation>S</variation>
    <location>
        <position position="30"/>
    </location>
</feature>
<feature type="mutagenesis site" description="Abolished acetyltransferase activity." evidence="7">
    <original>F</original>
    <variation>A</variation>
    <location>
        <position position="34"/>
    </location>
</feature>
<feature type="mutagenesis site" description="Reduced acetyltransferase activity." evidence="6">
    <original>P</original>
    <variation>A</variation>
    <location>
        <position position="35"/>
    </location>
</feature>
<feature type="mutagenesis site" description="Reduced acetyltransferase activity." evidence="6">
    <original>I</original>
    <variation>A</variation>
    <location>
        <position position="36"/>
    </location>
</feature>
<feature type="mutagenesis site" description="Only slightly affects acetyltransferase activity." evidence="7">
    <original>E</original>
    <variation>A</variation>
    <variation>F</variation>
    <location>
        <position position="37"/>
    </location>
</feature>
<feature type="mutagenesis site" description="Strongly reduced acetyltransferase activity." evidence="6 7">
    <original>Y</original>
    <variation>A</variation>
    <location>
        <position position="38"/>
    </location>
</feature>
<feature type="mutagenesis site" description="Slightly reduced acetyltransferase activity." evidence="7">
    <original>K</original>
    <variation>A</variation>
    <location>
        <position position="79"/>
    </location>
</feature>
<feature type="mutagenesis site" description="Increased acetyltransferase activity." evidence="7">
    <original>K</original>
    <variation>R</variation>
    <variation>Q</variation>
    <location>
        <position position="79"/>
    </location>
</feature>
<feature type="mutagenesis site" description="Decreased acetyltransferase activity; when associated with R-105, R-109, R-121 and R-156." evidence="4">
    <original>K</original>
    <variation>R</variation>
    <location>
        <position position="79"/>
    </location>
</feature>
<feature type="mutagenesis site" description="Slightly increased acetyltransferase activity." evidence="7">
    <original>E</original>
    <variation>A</variation>
    <location>
        <position position="80"/>
    </location>
</feature>
<feature type="mutagenesis site" description="Slightly increased acetyltransferase activity." evidence="6 7">
    <original>D</original>
    <variation>A</variation>
    <location>
        <position position="81"/>
    </location>
</feature>
<feature type="mutagenesis site" description="Slightly increased acetyltransferase activity." evidence="7">
    <original>D</original>
    <variation>A</variation>
    <location>
        <position position="83"/>
    </location>
</feature>
<feature type="mutagenesis site" description="Slightly altered acetyltransferase activity." evidence="6">
    <original>I</original>
    <variation>A</variation>
    <location>
        <position position="84"/>
    </location>
</feature>
<feature type="mutagenesis site" description="Abolished acetyltransferase activity." evidence="6 7">
    <original>Y</original>
    <variation>A</variation>
    <variation>F</variation>
    <location>
        <position position="97"/>
    </location>
</feature>
<feature type="mutagenesis site" description="Decreased acetyltransferase activity; when associated with R-79, R-109, R-121 and R-156." evidence="4">
    <original>K</original>
    <variation>R</variation>
    <location>
        <position position="105"/>
    </location>
</feature>
<feature type="mutagenesis site" description="Decreased acetyltransferase activity; when associated with R-79, R-105, R-121 and R-156." evidence="4">
    <original>K</original>
    <variation>R</variation>
    <location>
        <position position="109"/>
    </location>
</feature>
<feature type="mutagenesis site" description="Abolishes acetyltransferase activity." evidence="4">
    <original>G</original>
    <variation>A</variation>
    <location>
        <position position="111"/>
    </location>
</feature>
<feature type="mutagenesis site" description="Decreased acetyltransferase activity; when associated with R-79, R-105, R-109 and R-156." evidence="4">
    <original>K</original>
    <variation>R</variation>
    <location>
        <position position="121"/>
    </location>
</feature>
<feature type="mutagenesis site" description="Does not affect localization to the Golgi apparatus; when associated with S-19; S-30; S-207 and S-222." evidence="5">
    <original>C</original>
    <variation>S</variation>
    <location>
        <position position="132"/>
    </location>
</feature>
<feature type="mutagenesis site" description="Abolished acetyltransferase activity." evidence="6 7">
    <original>H</original>
    <variation>A</variation>
    <variation>F</variation>
    <location>
        <position position="138"/>
    </location>
</feature>
<feature type="mutagenesis site" description="Decreased acetyltransferase activity." evidence="6">
    <original>L</original>
    <variation>A</variation>
    <location>
        <position position="140"/>
    </location>
</feature>
<feature type="mutagenesis site" description="Strongly reduced acetyltransferase activity." evidence="7">
    <original>N</original>
    <variation>A</variation>
    <location>
        <position position="143"/>
    </location>
</feature>
<feature type="mutagenesis site" description="Decreased histone acetyltransferase activity; when associated with R-79, R-105, R-109 and R-121." evidence="4">
    <original>K</original>
    <variation>R</variation>
    <location>
        <position position="156"/>
    </location>
</feature>
<feature type="mutagenesis site" description="Slightly altered acetyltransferase activity." evidence="6">
    <original>Y</original>
    <variation>A</variation>
    <variation>F</variation>
    <location>
        <position position="164"/>
    </location>
</feature>
<feature type="mutagenesis site" description="Strongly reduced acetyltransferase activity." evidence="6 7">
    <original>Y</original>
    <variation>A</variation>
    <variation>F</variation>
    <location>
        <position position="165"/>
    </location>
</feature>
<feature type="mutagenesis site" description="Reduced acetyltransferase activity." evidence="6">
    <original>I</original>
    <variation>A</variation>
    <location>
        <position position="167"/>
    </location>
</feature>
<feature type="mutagenesis site" description="Does not affect localization to the Golgi apparatus; when associated with S-19; S-30; S-132 and S-222." evidence="5">
    <original>C</original>
    <variation>S</variation>
    <location>
        <position position="207"/>
    </location>
</feature>
<feature type="mutagenesis site" description="Does not affect localization to the Golgi apparatus." evidence="5">
    <original>LL</original>
    <variation>AA</variation>
    <location>
        <begin position="220"/>
        <end position="221"/>
    </location>
</feature>
<feature type="mutagenesis site" description="Does not affect localization to the Golgi apparatus; when associated with S-19; S-30; S-132 and S-207." evidence="5">
    <original>C</original>
    <variation>S</variation>
    <location>
        <position position="222"/>
    </location>
</feature>
<feature type="sequence conflict" description="In Ref. 1; AAQ88907." evidence="14" ref="1">
    <original>S</original>
    <variation>T</variation>
    <location>
        <position position="87"/>
    </location>
</feature>
<feature type="sequence conflict" description="In Ref. 3; CAG33605." evidence="14" ref="3">
    <original>M</original>
    <variation>I</variation>
    <location>
        <position position="242"/>
    </location>
</feature>
<feature type="helix" evidence="23">
    <location>
        <begin position="3"/>
        <end position="9"/>
    </location>
</feature>
<feature type="strand" evidence="23">
    <location>
        <begin position="12"/>
        <end position="17"/>
    </location>
</feature>
<feature type="helix" evidence="23">
    <location>
        <begin position="20"/>
        <end position="22"/>
    </location>
</feature>
<feature type="helix" evidence="23">
    <location>
        <begin position="23"/>
        <end position="33"/>
    </location>
</feature>
<feature type="helix" evidence="23">
    <location>
        <begin position="40"/>
        <end position="48"/>
    </location>
</feature>
<feature type="strand" evidence="23">
    <location>
        <begin position="52"/>
        <end position="59"/>
    </location>
</feature>
<feature type="strand" evidence="23">
    <location>
        <begin position="62"/>
        <end position="73"/>
    </location>
</feature>
<feature type="helix" evidence="23">
    <location>
        <begin position="74"/>
        <end position="76"/>
    </location>
</feature>
<feature type="helix" evidence="23">
    <location>
        <begin position="79"/>
        <end position="81"/>
    </location>
</feature>
<feature type="turn" evidence="24">
    <location>
        <begin position="82"/>
        <end position="87"/>
    </location>
</feature>
<feature type="strand" evidence="23">
    <location>
        <begin position="94"/>
        <end position="103"/>
    </location>
</feature>
<feature type="helix" evidence="23">
    <location>
        <begin position="105"/>
        <end position="107"/>
    </location>
</feature>
<feature type="helix" evidence="23">
    <location>
        <begin position="112"/>
        <end position="128"/>
    </location>
</feature>
<feature type="turn" evidence="23">
    <location>
        <begin position="129"/>
        <end position="131"/>
    </location>
</feature>
<feature type="strand" evidence="23">
    <location>
        <begin position="132"/>
        <end position="140"/>
    </location>
</feature>
<feature type="helix" evidence="23">
    <location>
        <begin position="144"/>
        <end position="151"/>
    </location>
</feature>
<feature type="turn" evidence="23">
    <location>
        <begin position="152"/>
        <end position="154"/>
    </location>
</feature>
<feature type="strand" evidence="23">
    <location>
        <begin position="156"/>
        <end position="167"/>
    </location>
</feature>
<feature type="strand" evidence="23">
    <location>
        <begin position="170"/>
        <end position="180"/>
    </location>
</feature>
<feature type="helix" evidence="23">
    <location>
        <begin position="190"/>
        <end position="201"/>
    </location>
</feature>
<feature type="helix" evidence="23">
    <location>
        <begin position="206"/>
        <end position="208"/>
    </location>
</feature>
<feature type="sequence conflict" description="In Ref. 2; BAG60760." evidence="14" ref="2">
    <original>R</original>
    <variation>Q</variation>
    <location sequence="Q9H7X0-5">
        <position position="180"/>
    </location>
</feature>
<name>NAA60_HUMAN</name>
<evidence type="ECO:0000255" key="1">
    <source>
        <dbReference type="PROSITE-ProRule" id="PRU00532"/>
    </source>
</evidence>
<evidence type="ECO:0000269" key="2">
    <source>
    </source>
</evidence>
<evidence type="ECO:0000269" key="3">
    <source>
    </source>
</evidence>
<evidence type="ECO:0000269" key="4">
    <source>
    </source>
</evidence>
<evidence type="ECO:0000269" key="5">
    <source>
    </source>
</evidence>
<evidence type="ECO:0000269" key="6">
    <source>
    </source>
</evidence>
<evidence type="ECO:0000269" key="7">
    <source>
    </source>
</evidence>
<evidence type="ECO:0000269" key="8">
    <source>
    </source>
</evidence>
<evidence type="ECO:0000303" key="9">
    <source>
    </source>
</evidence>
<evidence type="ECO:0000303" key="10">
    <source>
    </source>
</evidence>
<evidence type="ECO:0000303" key="11">
    <source>
    </source>
</evidence>
<evidence type="ECO:0000303" key="12">
    <source>
    </source>
</evidence>
<evidence type="ECO:0000303" key="13">
    <source>
    </source>
</evidence>
<evidence type="ECO:0000305" key="14"/>
<evidence type="ECO:0000305" key="15">
    <source>
    </source>
</evidence>
<evidence type="ECO:0000305" key="16">
    <source>
    </source>
</evidence>
<evidence type="ECO:0000312" key="17">
    <source>
        <dbReference type="HGNC" id="HGNC:25875"/>
    </source>
</evidence>
<evidence type="ECO:0000312" key="18">
    <source>
        <dbReference type="PDB" id="5HGZ"/>
    </source>
</evidence>
<evidence type="ECO:0000312" key="19">
    <source>
        <dbReference type="PDB" id="5HH0"/>
    </source>
</evidence>
<evidence type="ECO:0000312" key="20">
    <source>
        <dbReference type="PDB" id="5HH1"/>
    </source>
</evidence>
<evidence type="ECO:0000312" key="21">
    <source>
        <dbReference type="PDB" id="5ICV"/>
    </source>
</evidence>
<evidence type="ECO:0000312" key="22">
    <source>
        <dbReference type="PDB" id="5ICW"/>
    </source>
</evidence>
<evidence type="ECO:0007829" key="23">
    <source>
        <dbReference type="PDB" id="5HGZ"/>
    </source>
</evidence>
<evidence type="ECO:0007829" key="24">
    <source>
        <dbReference type="PDB" id="5ICV"/>
    </source>
</evidence>
<accession>Q9H7X0</accession>
<accession>B3KRQ0</accession>
<accession>B4DLZ0</accession>
<accession>B4DPZ8</accession>
<accession>B4DYC4</accession>
<accession>D3DUC2</accession>
<accession>E7EQ65</accession>
<accession>Q6IA31</accession>
<accession>Q6UX26</accession>
<reference key="1">
    <citation type="journal article" date="2003" name="Genome Res.">
        <title>The secreted protein discovery initiative (SPDI), a large-scale effort to identify novel human secreted and transmembrane proteins: a bioinformatics assessment.</title>
        <authorList>
            <person name="Clark H.F."/>
            <person name="Gurney A.L."/>
            <person name="Abaya E."/>
            <person name="Baker K."/>
            <person name="Baldwin D.T."/>
            <person name="Brush J."/>
            <person name="Chen J."/>
            <person name="Chow B."/>
            <person name="Chui C."/>
            <person name="Crowley C."/>
            <person name="Currell B."/>
            <person name="Deuel B."/>
            <person name="Dowd P."/>
            <person name="Eaton D."/>
            <person name="Foster J.S."/>
            <person name="Grimaldi C."/>
            <person name="Gu Q."/>
            <person name="Hass P.E."/>
            <person name="Heldens S."/>
            <person name="Huang A."/>
            <person name="Kim H.S."/>
            <person name="Klimowski L."/>
            <person name="Jin Y."/>
            <person name="Johnson S."/>
            <person name="Lee J."/>
            <person name="Lewis L."/>
            <person name="Liao D."/>
            <person name="Mark M.R."/>
            <person name="Robbie E."/>
            <person name="Sanchez C."/>
            <person name="Schoenfeld J."/>
            <person name="Seshagiri S."/>
            <person name="Simmons L."/>
            <person name="Singh J."/>
            <person name="Smith V."/>
            <person name="Stinson J."/>
            <person name="Vagts A."/>
            <person name="Vandlen R.L."/>
            <person name="Watanabe C."/>
            <person name="Wieand D."/>
            <person name="Woods K."/>
            <person name="Xie M.-H."/>
            <person name="Yansura D.G."/>
            <person name="Yi S."/>
            <person name="Yu G."/>
            <person name="Yuan J."/>
            <person name="Zhang M."/>
            <person name="Zhang Z."/>
            <person name="Goddard A.D."/>
            <person name="Wood W.I."/>
            <person name="Godowski P.J."/>
            <person name="Gray A.M."/>
        </authorList>
    </citation>
    <scope>NUCLEOTIDE SEQUENCE [LARGE SCALE MRNA] (ISOFORM 1)</scope>
</reference>
<reference key="2">
    <citation type="journal article" date="2004" name="Nat. Genet.">
        <title>Complete sequencing and characterization of 21,243 full-length human cDNAs.</title>
        <authorList>
            <person name="Ota T."/>
            <person name="Suzuki Y."/>
            <person name="Nishikawa T."/>
            <person name="Otsuki T."/>
            <person name="Sugiyama T."/>
            <person name="Irie R."/>
            <person name="Wakamatsu A."/>
            <person name="Hayashi K."/>
            <person name="Sato H."/>
            <person name="Nagai K."/>
            <person name="Kimura K."/>
            <person name="Makita H."/>
            <person name="Sekine M."/>
            <person name="Obayashi M."/>
            <person name="Nishi T."/>
            <person name="Shibahara T."/>
            <person name="Tanaka T."/>
            <person name="Ishii S."/>
            <person name="Yamamoto J."/>
            <person name="Saito K."/>
            <person name="Kawai Y."/>
            <person name="Isono Y."/>
            <person name="Nakamura Y."/>
            <person name="Nagahari K."/>
            <person name="Murakami K."/>
            <person name="Yasuda T."/>
            <person name="Iwayanagi T."/>
            <person name="Wagatsuma M."/>
            <person name="Shiratori A."/>
            <person name="Sudo H."/>
            <person name="Hosoiri T."/>
            <person name="Kaku Y."/>
            <person name="Kodaira H."/>
            <person name="Kondo H."/>
            <person name="Sugawara M."/>
            <person name="Takahashi M."/>
            <person name="Kanda K."/>
            <person name="Yokoi T."/>
            <person name="Furuya T."/>
            <person name="Kikkawa E."/>
            <person name="Omura Y."/>
            <person name="Abe K."/>
            <person name="Kamihara K."/>
            <person name="Katsuta N."/>
            <person name="Sato K."/>
            <person name="Tanikawa M."/>
            <person name="Yamazaki M."/>
            <person name="Ninomiya K."/>
            <person name="Ishibashi T."/>
            <person name="Yamashita H."/>
            <person name="Murakawa K."/>
            <person name="Fujimori K."/>
            <person name="Tanai H."/>
            <person name="Kimata M."/>
            <person name="Watanabe M."/>
            <person name="Hiraoka S."/>
            <person name="Chiba Y."/>
            <person name="Ishida S."/>
            <person name="Ono Y."/>
            <person name="Takiguchi S."/>
            <person name="Watanabe S."/>
            <person name="Yosida M."/>
            <person name="Hotuta T."/>
            <person name="Kusano J."/>
            <person name="Kanehori K."/>
            <person name="Takahashi-Fujii A."/>
            <person name="Hara H."/>
            <person name="Tanase T.-O."/>
            <person name="Nomura Y."/>
            <person name="Togiya S."/>
            <person name="Komai F."/>
            <person name="Hara R."/>
            <person name="Takeuchi K."/>
            <person name="Arita M."/>
            <person name="Imose N."/>
            <person name="Musashino K."/>
            <person name="Yuuki H."/>
            <person name="Oshima A."/>
            <person name="Sasaki N."/>
            <person name="Aotsuka S."/>
            <person name="Yoshikawa Y."/>
            <person name="Matsunawa H."/>
            <person name="Ichihara T."/>
            <person name="Shiohata N."/>
            <person name="Sano S."/>
            <person name="Moriya S."/>
            <person name="Momiyama H."/>
            <person name="Satoh N."/>
            <person name="Takami S."/>
            <person name="Terashima Y."/>
            <person name="Suzuki O."/>
            <person name="Nakagawa S."/>
            <person name="Senoh A."/>
            <person name="Mizoguchi H."/>
            <person name="Goto Y."/>
            <person name="Shimizu F."/>
            <person name="Wakebe H."/>
            <person name="Hishigaki H."/>
            <person name="Watanabe T."/>
            <person name="Sugiyama A."/>
            <person name="Takemoto M."/>
            <person name="Kawakami B."/>
            <person name="Yamazaki M."/>
            <person name="Watanabe K."/>
            <person name="Kumagai A."/>
            <person name="Itakura S."/>
            <person name="Fukuzumi Y."/>
            <person name="Fujimori Y."/>
            <person name="Komiyama M."/>
            <person name="Tashiro H."/>
            <person name="Tanigami A."/>
            <person name="Fujiwara T."/>
            <person name="Ono T."/>
            <person name="Yamada K."/>
            <person name="Fujii Y."/>
            <person name="Ozaki K."/>
            <person name="Hirao M."/>
            <person name="Ohmori Y."/>
            <person name="Kawabata A."/>
            <person name="Hikiji T."/>
            <person name="Kobatake N."/>
            <person name="Inagaki H."/>
            <person name="Ikema Y."/>
            <person name="Okamoto S."/>
            <person name="Okitani R."/>
            <person name="Kawakami T."/>
            <person name="Noguchi S."/>
            <person name="Itoh T."/>
            <person name="Shigeta K."/>
            <person name="Senba T."/>
            <person name="Matsumura K."/>
            <person name="Nakajima Y."/>
            <person name="Mizuno T."/>
            <person name="Morinaga M."/>
            <person name="Sasaki M."/>
            <person name="Togashi T."/>
            <person name="Oyama M."/>
            <person name="Hata H."/>
            <person name="Watanabe M."/>
            <person name="Komatsu T."/>
            <person name="Mizushima-Sugano J."/>
            <person name="Satoh T."/>
            <person name="Shirai Y."/>
            <person name="Takahashi Y."/>
            <person name="Nakagawa K."/>
            <person name="Okumura K."/>
            <person name="Nagase T."/>
            <person name="Nomura N."/>
            <person name="Kikuchi H."/>
            <person name="Masuho Y."/>
            <person name="Yamashita R."/>
            <person name="Nakai K."/>
            <person name="Yada T."/>
            <person name="Nakamura Y."/>
            <person name="Ohara O."/>
            <person name="Isogai T."/>
            <person name="Sugano S."/>
        </authorList>
    </citation>
    <scope>NUCLEOTIDE SEQUENCE [LARGE SCALE MRNA] (ISOFORMS 1; 2; 3; 4 AND 5)</scope>
    <source>
        <tissue>Fetal brain</tissue>
        <tissue>Mesangial cell</tissue>
        <tissue>Teratocarcinoma</tissue>
        <tissue>Testis</tissue>
    </source>
</reference>
<reference key="3">
    <citation type="submission" date="2004-06" db="EMBL/GenBank/DDBJ databases">
        <title>Cloning of human full open reading frames in Gateway(TM) system entry vector (pDONR201).</title>
        <authorList>
            <person name="Ebert L."/>
            <person name="Schick M."/>
            <person name="Neubert P."/>
            <person name="Schatten R."/>
            <person name="Henze S."/>
            <person name="Korn B."/>
        </authorList>
    </citation>
    <scope>NUCLEOTIDE SEQUENCE [LARGE SCALE MRNA] (ISOFORM 1)</scope>
</reference>
<reference key="4">
    <citation type="journal article" date="2004" name="Nature">
        <title>The sequence and analysis of duplication-rich human chromosome 16.</title>
        <authorList>
            <person name="Martin J."/>
            <person name="Han C."/>
            <person name="Gordon L.A."/>
            <person name="Terry A."/>
            <person name="Prabhakar S."/>
            <person name="She X."/>
            <person name="Xie G."/>
            <person name="Hellsten U."/>
            <person name="Chan Y.M."/>
            <person name="Altherr M."/>
            <person name="Couronne O."/>
            <person name="Aerts A."/>
            <person name="Bajorek E."/>
            <person name="Black S."/>
            <person name="Blumer H."/>
            <person name="Branscomb E."/>
            <person name="Brown N.C."/>
            <person name="Bruno W.J."/>
            <person name="Buckingham J.M."/>
            <person name="Callen D.F."/>
            <person name="Campbell C.S."/>
            <person name="Campbell M.L."/>
            <person name="Campbell E.W."/>
            <person name="Caoile C."/>
            <person name="Challacombe J.F."/>
            <person name="Chasteen L.A."/>
            <person name="Chertkov O."/>
            <person name="Chi H.C."/>
            <person name="Christensen M."/>
            <person name="Clark L.M."/>
            <person name="Cohn J.D."/>
            <person name="Denys M."/>
            <person name="Detter J.C."/>
            <person name="Dickson M."/>
            <person name="Dimitrijevic-Bussod M."/>
            <person name="Escobar J."/>
            <person name="Fawcett J.J."/>
            <person name="Flowers D."/>
            <person name="Fotopulos D."/>
            <person name="Glavina T."/>
            <person name="Gomez M."/>
            <person name="Gonzales E."/>
            <person name="Goodstein D."/>
            <person name="Goodwin L.A."/>
            <person name="Grady D.L."/>
            <person name="Grigoriev I."/>
            <person name="Groza M."/>
            <person name="Hammon N."/>
            <person name="Hawkins T."/>
            <person name="Haydu L."/>
            <person name="Hildebrand C.E."/>
            <person name="Huang W."/>
            <person name="Israni S."/>
            <person name="Jett J."/>
            <person name="Jewett P.B."/>
            <person name="Kadner K."/>
            <person name="Kimball H."/>
            <person name="Kobayashi A."/>
            <person name="Krawczyk M.-C."/>
            <person name="Leyba T."/>
            <person name="Longmire J.L."/>
            <person name="Lopez F."/>
            <person name="Lou Y."/>
            <person name="Lowry S."/>
            <person name="Ludeman T."/>
            <person name="Manohar C.F."/>
            <person name="Mark G.A."/>
            <person name="McMurray K.L."/>
            <person name="Meincke L.J."/>
            <person name="Morgan J."/>
            <person name="Moyzis R.K."/>
            <person name="Mundt M.O."/>
            <person name="Munk A.C."/>
            <person name="Nandkeshwar R.D."/>
            <person name="Pitluck S."/>
            <person name="Pollard M."/>
            <person name="Predki P."/>
            <person name="Parson-Quintana B."/>
            <person name="Ramirez L."/>
            <person name="Rash S."/>
            <person name="Retterer J."/>
            <person name="Ricke D.O."/>
            <person name="Robinson D.L."/>
            <person name="Rodriguez A."/>
            <person name="Salamov A."/>
            <person name="Saunders E.H."/>
            <person name="Scott D."/>
            <person name="Shough T."/>
            <person name="Stallings R.L."/>
            <person name="Stalvey M."/>
            <person name="Sutherland R.D."/>
            <person name="Tapia R."/>
            <person name="Tesmer J.G."/>
            <person name="Thayer N."/>
            <person name="Thompson L.S."/>
            <person name="Tice H."/>
            <person name="Torney D.C."/>
            <person name="Tran-Gyamfi M."/>
            <person name="Tsai M."/>
            <person name="Ulanovsky L.E."/>
            <person name="Ustaszewska A."/>
            <person name="Vo N."/>
            <person name="White P.S."/>
            <person name="Williams A.L."/>
            <person name="Wills P.L."/>
            <person name="Wu J.-R."/>
            <person name="Wu K."/>
            <person name="Yang J."/>
            <person name="DeJong P."/>
            <person name="Bruce D."/>
            <person name="Doggett N.A."/>
            <person name="Deaven L."/>
            <person name="Schmutz J."/>
            <person name="Grimwood J."/>
            <person name="Richardson P."/>
            <person name="Rokhsar D.S."/>
            <person name="Eichler E.E."/>
            <person name="Gilna P."/>
            <person name="Lucas S.M."/>
            <person name="Myers R.M."/>
            <person name="Rubin E.M."/>
            <person name="Pennacchio L.A."/>
        </authorList>
    </citation>
    <scope>NUCLEOTIDE SEQUENCE [LARGE SCALE GENOMIC DNA]</scope>
</reference>
<reference key="5">
    <citation type="submission" date="2005-09" db="EMBL/GenBank/DDBJ databases">
        <authorList>
            <person name="Mural R.J."/>
            <person name="Istrail S."/>
            <person name="Sutton G.G."/>
            <person name="Florea L."/>
            <person name="Halpern A.L."/>
            <person name="Mobarry C.M."/>
            <person name="Lippert R."/>
            <person name="Walenz B."/>
            <person name="Shatkay H."/>
            <person name="Dew I."/>
            <person name="Miller J.R."/>
            <person name="Flanigan M.J."/>
            <person name="Edwards N.J."/>
            <person name="Bolanos R."/>
            <person name="Fasulo D."/>
            <person name="Halldorsson B.V."/>
            <person name="Hannenhalli S."/>
            <person name="Turner R."/>
            <person name="Yooseph S."/>
            <person name="Lu F."/>
            <person name="Nusskern D.R."/>
            <person name="Shue B.C."/>
            <person name="Zheng X.H."/>
            <person name="Zhong F."/>
            <person name="Delcher A.L."/>
            <person name="Huson D.H."/>
            <person name="Kravitz S.A."/>
            <person name="Mouchard L."/>
            <person name="Reinert K."/>
            <person name="Remington K.A."/>
            <person name="Clark A.G."/>
            <person name="Waterman M.S."/>
            <person name="Eichler E.E."/>
            <person name="Adams M.D."/>
            <person name="Hunkapiller M.W."/>
            <person name="Myers E.W."/>
            <person name="Venter J.C."/>
        </authorList>
    </citation>
    <scope>NUCLEOTIDE SEQUENCE [LARGE SCALE GENOMIC DNA]</scope>
</reference>
<reference key="6">
    <citation type="journal article" date="2004" name="Genome Res.">
        <title>The status, quality, and expansion of the NIH full-length cDNA project: the Mammalian Gene Collection (MGC).</title>
        <authorList>
            <consortium name="The MGC Project Team"/>
        </authorList>
    </citation>
    <scope>NUCLEOTIDE SEQUENCE [LARGE SCALE MRNA] (ISOFORM 1)</scope>
    <source>
        <tissue>Brain</tissue>
    </source>
</reference>
<reference key="7">
    <citation type="journal article" date="2011" name="Hum. Mol. Genet.">
        <title>Methylation screening of reciprocal genome-wide UPDs identifies novel human-specific imprinted genes.</title>
        <authorList>
            <person name="Nakabayashi K."/>
            <person name="Trujillo A.M."/>
            <person name="Tayama C."/>
            <person name="Camprubi C."/>
            <person name="Yoshida W."/>
            <person name="Lapunzina P."/>
            <person name="Sanchez A."/>
            <person name="Soejima H."/>
            <person name="Aburatani H."/>
            <person name="Nagae G."/>
            <person name="Ogata T."/>
            <person name="Hata K."/>
            <person name="Monk D."/>
        </authorList>
    </citation>
    <scope>IMPRINTING</scope>
    <scope>INDUCTION</scope>
</reference>
<reference key="8">
    <citation type="journal article" date="2011" name="Mol. Cell">
        <title>HAT4, a Golgi apparatus-anchored B-type histone acetyltransferase, acetylates free histone H4 and facilitates chromatin assembly.</title>
        <authorList>
            <person name="Yang X."/>
            <person name="Yu W."/>
            <person name="Shi L."/>
            <person name="Sun L."/>
            <person name="Liang J."/>
            <person name="Yi X."/>
            <person name="Li Q."/>
            <person name="Zhang Y."/>
            <person name="Yang F."/>
            <person name="Han X."/>
            <person name="Zhang D."/>
            <person name="Yang J."/>
            <person name="Yao Z."/>
            <person name="Shang Y."/>
        </authorList>
    </citation>
    <scope>FUNCTION</scope>
    <scope>CATALYTIC ACTIVITY</scope>
    <scope>SUBCELLULAR LOCATION</scope>
    <scope>ACETYLATION AT LYS-79; LYS-105; LYS-109; LYS-121 AND LYS-156</scope>
    <scope>MUTAGENESIS OF LYS-79; LYS-105; LYS-109; GLY-111; LYS-121 AND LYS-156</scope>
</reference>
<reference key="9">
    <citation type="journal article" date="2011" name="PLoS Genet.">
        <title>NatF contributes to an evolutionary shift in protein N-terminal acetylation and is important for normal chromosome segregation.</title>
        <authorList>
            <person name="Van Damme P."/>
            <person name="Hole K."/>
            <person name="Pimenta-Marques A."/>
            <person name="Helsens K."/>
            <person name="Vandekerckhove J."/>
            <person name="Martinho R.G."/>
            <person name="Gevaert K."/>
            <person name="Arnesen T."/>
        </authorList>
    </citation>
    <scope>FUNCTION</scope>
</reference>
<reference key="10">
    <citation type="journal article" date="2015" name="Cell Rep.">
        <title>An organellar nalpha-acetyltransferase, naa60, acetylates cytosolic N termini of transmembrane proteins and maintains Golgi integrity.</title>
        <authorList>
            <person name="Aksnes H."/>
            <person name="Van Damme P."/>
            <person name="Goris M."/>
            <person name="Starheim K.K."/>
            <person name="Marie M."/>
            <person name="Stoeve S.I."/>
            <person name="Hoel C."/>
            <person name="Kalvik T.V."/>
            <person name="Hole K."/>
            <person name="Glomnes N."/>
            <person name="Furnes C."/>
            <person name="Ljostveit S."/>
            <person name="Ziegler M."/>
            <person name="Niere M."/>
            <person name="Gevaert K."/>
            <person name="Arnesen T."/>
        </authorList>
    </citation>
    <scope>FUNCTION</scope>
    <scope>CATALYTIC ACTIVITY</scope>
    <scope>SUBCELLULAR LOCATION</scope>
    <scope>TOPOLOGY</scope>
    <scope>MUTAGENESIS OF CYS-19; CYS-30; CYS-132; CYS-207; 221-LEU-LEU-222 AND CYS-222</scope>
</reference>
<reference key="11">
    <citation type="journal article" date="2024" name="Nat. Commun.">
        <title>Biallelic NAA60 variants with impaired n-terminal acetylation capacity cause autosomal recessive primary familial brain calcifications.</title>
        <authorList>
            <person name="Chelban V."/>
            <person name="Aksnes H."/>
            <person name="Maroofian R."/>
            <person name="LaMonica L.C."/>
            <person name="Seabra L."/>
            <person name="Siggervaag A."/>
            <person name="Devic P."/>
            <person name="Shamseldin H.E."/>
            <person name="Vandrovcova J."/>
            <person name="Murphy D."/>
            <person name="Richard A.C."/>
            <person name="Quenez O."/>
            <person name="Bonnevalle A."/>
            <person name="Zanetti M.N."/>
            <person name="Kaiyrzhanov R."/>
            <person name="Salpietro V."/>
            <person name="Efthymiou S."/>
            <person name="Schottlaender L.V."/>
            <person name="Morsy H."/>
            <person name="Scardamaglia A."/>
            <person name="Tariq A."/>
            <person name="Pagnamenta A.T."/>
            <person name="Pennavaria A."/>
            <person name="Krogstad L.S."/>
            <person name="Bekkelund A.K."/>
            <person name="Caiella A."/>
            <person name="Glomnes N."/>
            <person name="Broenstad K.M."/>
            <person name="Tury S."/>
            <person name="Moreno De Luca A."/>
            <person name="Boland-Auge A."/>
            <person name="Olaso R."/>
            <person name="Deleuze J.F."/>
            <person name="Anheim M."/>
            <person name="Cretin B."/>
            <person name="Vona B."/>
            <person name="Alajlan F."/>
            <person name="Abdulwahab F."/>
            <person name="Battini J.L."/>
            <person name="Ipek R."/>
            <person name="Bauer P."/>
            <person name="Zifarelli G."/>
            <person name="Gungor S."/>
            <person name="Kurul S.H."/>
            <person name="Lochmuller H."/>
            <person name="Da'as S.I."/>
            <person name="Fakhro K.A."/>
            <person name="Gomez-Pascual A."/>
            <person name="Botia J.A."/>
            <person name="Wood N.W."/>
            <person name="Horvath R."/>
            <person name="Ernst A.M."/>
            <person name="Rothman J.E."/>
            <person name="McEntagart M."/>
            <person name="Crow Y.J."/>
            <person name="Alkuraya F.S."/>
            <person name="Nicolas G."/>
            <person name="Arnesen T."/>
            <person name="Houlden H."/>
        </authorList>
    </citation>
    <scope>INVOLVEMENT IN IBGC9</scope>
    <scope>VARIANTS IBGC9 ARG-17; CYS-44; TYR-131 AND THR-143</scope>
    <scope>FUNCTION</scope>
    <scope>SUBCELLULAR LOCATION</scope>
    <scope>CHARACTERIZATION OF VARIANTS IBGC9 ARG-17; CYS-44; TYR-131 AND THR-143</scope>
</reference>
<reference evidence="18 19 20" key="12">
    <citation type="journal article" date="2016" name="Sci. Rep.">
        <title>Structure and function of human Naa60 (NatF), a Golgi-localized bi-functional acetyltransferase.</title>
        <authorList>
            <person name="Chen J.Y."/>
            <person name="Liu L."/>
            <person name="Cao C.L."/>
            <person name="Li M.J."/>
            <person name="Tan K."/>
            <person name="Yang X."/>
            <person name="Yun C.H."/>
        </authorList>
    </citation>
    <scope>X-RAY CRYSTALLOGRAPHY (1.38 ANGSTROMS) OF 4-242 IN COMPLEX WITH ACETYL-COA</scope>
    <scope>FUNCTION</scope>
    <scope>ACTIVE SITES</scope>
    <scope>MUTAGENESIS OF PHE-34; GLU-37; TYR-38; LYS-79; GLU-80; ASP-81; ASP-83; TYR-97; HIS-138; ASN-143 AND TYR-165</scope>
</reference>
<reference evidence="21 22" key="13">
    <citation type="journal article" date="2016" name="Structure">
        <title>Crystal structure of the Golgi-associated human Nalpha-Acetyltransferase 60 Reveals the molecular determinants for substrate-specific acetylation.</title>
        <authorList>
            <person name="Stoeve S.I."/>
            <person name="Magin R.S."/>
            <person name="Foyn H."/>
            <person name="Haug B.E."/>
            <person name="Marmorstein R."/>
            <person name="Arnesen T."/>
        </authorList>
    </citation>
    <scope>X-RAY CRYSTALLOGRAPHY (1.53 ANGSTROMS) OF 3-184 IN COMPLEX WITH ACETYL-COA AND SUBSTRATE</scope>
    <scope>FUNCTION</scope>
    <scope>ACTIVE SITES</scope>
    <scope>SUBUNIT</scope>
    <scope>MUTAGENESIS OF PRO-35; ILE-36; TYR-38; ASP-81; ILE-84; TYR-97; HIS-138; LEU-140; TYR-164; TYR-165 AND ILE-167</scope>
</reference>
<comment type="function">
    <text evidence="3 5 6 7 8 15">N-alpha-acetyltransferase that specifically mediates the acetylation of N-terminal residues of the transmembrane proteins, with a strong preference for N-termini facing the cytosol (PubMed:25732826, PubMed:38480682). Displays N-terminal acetyltransferase activity towards a range of N-terminal sequences including those starting with Met-Lys, Met-Val, Met-Ala and Met-Met (PubMed:21750686, PubMed:25732826, PubMed:27320834, PubMed:27550639). Required for normal chromosomal segregation during anaphase (PubMed:21750686). May also show histone acetyltransferase activity; such results are however unclear in vivo and would require additional experimental evidences (PubMed:21981917).</text>
</comment>
<comment type="catalytic activity">
    <reaction evidence="5">
        <text>N-terminal L-methionyl-[transmembrane protein] + acetyl-CoA = N-terminal N(alpha)-acetyl-L-methionyl-[transmembrane protein] + CoA + H(+)</text>
        <dbReference type="Rhea" id="RHEA:50604"/>
        <dbReference type="Rhea" id="RHEA-COMP:12745"/>
        <dbReference type="Rhea" id="RHEA-COMP:12746"/>
        <dbReference type="ChEBI" id="CHEBI:15378"/>
        <dbReference type="ChEBI" id="CHEBI:57287"/>
        <dbReference type="ChEBI" id="CHEBI:57288"/>
        <dbReference type="ChEBI" id="CHEBI:64731"/>
        <dbReference type="ChEBI" id="CHEBI:133414"/>
        <dbReference type="EC" id="2.3.1.259"/>
    </reaction>
</comment>
<comment type="catalytic activity">
    <reaction evidence="15">
        <text>L-lysyl-[protein] + acetyl-CoA = N(6)-acetyl-L-lysyl-[protein] + CoA + H(+)</text>
        <dbReference type="Rhea" id="RHEA:45948"/>
        <dbReference type="Rhea" id="RHEA-COMP:9752"/>
        <dbReference type="Rhea" id="RHEA-COMP:10731"/>
        <dbReference type="ChEBI" id="CHEBI:15378"/>
        <dbReference type="ChEBI" id="CHEBI:29969"/>
        <dbReference type="ChEBI" id="CHEBI:57287"/>
        <dbReference type="ChEBI" id="CHEBI:57288"/>
        <dbReference type="ChEBI" id="CHEBI:61930"/>
        <dbReference type="EC" id="2.3.1.48"/>
    </reaction>
</comment>
<comment type="subunit">
    <text evidence="6">Monomer and homodimer; monomer in presence of substrate and homodimer in its absence (PubMed:27320834).</text>
</comment>
<comment type="interaction">
    <interactant intactId="EBI-12260336">
        <id>Q9H7X0</id>
    </interactant>
    <interactant intactId="EBI-718729">
        <id>P55212</id>
        <label>CASP6</label>
    </interactant>
    <organismsDiffer>false</organismsDiffer>
    <experiments>3</experiments>
</comment>
<comment type="interaction">
    <interactant intactId="EBI-12260336">
        <id>Q9H7X0</id>
    </interactant>
    <interactant intactId="EBI-21591415">
        <id>P13473-2</id>
        <label>LAMP2</label>
    </interactant>
    <organismsDiffer>false</organismsDiffer>
    <experiments>3</experiments>
</comment>
<comment type="interaction">
    <interactant intactId="EBI-12260336">
        <id>Q9H7X0</id>
    </interactant>
    <interactant intactId="EBI-16439278">
        <id>Q6FHY5</id>
        <label>MEOX2</label>
    </interactant>
    <organismsDiffer>false</organismsDiffer>
    <experiments>3</experiments>
</comment>
<comment type="interaction">
    <interactant intactId="EBI-12260336">
        <id>Q9H7X0</id>
    </interactant>
    <interactant intactId="EBI-5280197">
        <id>O75400-2</id>
        <label>PRPF40A</label>
    </interactant>
    <organismsDiffer>false</organismsDiffer>
    <experiments>3</experiments>
</comment>
<comment type="interaction">
    <interactant intactId="EBI-12260336">
        <id>Q9H7X0</id>
    </interactant>
    <interactant intactId="EBI-2623095">
        <id>Q9Y371</id>
        <label>SH3GLB1</label>
    </interactant>
    <organismsDiffer>false</organismsDiffer>
    <experiments>3</experiments>
</comment>
<comment type="subcellular location">
    <subcellularLocation>
        <location evidence="4 5 8">Golgi apparatus membrane</location>
        <topology evidence="5">Peripheral membrane protein</topology>
        <orientation evidence="5">Cytoplasmic side</orientation>
    </subcellularLocation>
    <text evidence="16">Probably forms an intramembrane hairpin-like structure in the membrane.</text>
</comment>
<comment type="alternative products">
    <event type="alternative promoter"/>
    <event type="alternative splicing"/>
    <isoform>
        <id>Q9H7X0-1</id>
        <name>1</name>
        <sequence type="displayed"/>
    </isoform>
    <isoform>
        <id>Q9H7X0-2</id>
        <name>2</name>
        <sequence type="described" ref="VSP_044123"/>
    </isoform>
    <isoform>
        <id>Q9H7X0-3</id>
        <name>3</name>
        <sequence type="described" ref="VSP_044122"/>
    </isoform>
    <isoform>
        <id>Q9H7X0-4</id>
        <name>4</name>
        <sequence type="described" ref="VSP_044124"/>
    </isoform>
    <isoform>
        <id>Q9H7X0-5</id>
        <name>5</name>
        <sequence type="described" ref="VSP_044125"/>
    </isoform>
</comment>
<comment type="induction">
    <text evidence="2">Isoform 2: Imprinted (PubMed:21593219). Promoter methylation of the paternal allele may restrict expression to the maternal allele in placenta and leukocytes (PubMed:21593219). Isoform 1: Biallelically expressed (PubMed:21593219).</text>
</comment>
<comment type="PTM">
    <text evidence="4">Acetylated: autoacetylation is required for optimal acetyltransferase activity.</text>
</comment>
<comment type="disease" evidence="8">
    <disease id="DI-06885">
        <name>Basal ganglia calcification, idiopathic, 9, autosomal recessive</name>
        <acronym>IBGC9</acronym>
        <description>A form of basal ganglia calcification, a genetically heterogeneous condition characterized by symmetric calcification in the basal ganglia and other brain regions. Affected individuals can either be asymptomatic or show a wide spectrum of neuropsychiatric symptoms, including parkinsonism, dystonia, tremor, ataxia, dementia, psychosis, seizures, and chronic headache. Serum levels of calcium, phosphate, alkaline phosphatase and parathyroid hormone are normal. The neuropathological hallmark of the disease is vascular and pericapillary calcification, mainly of calcium phosphate, in the affected brain areas.</description>
        <dbReference type="MIM" id="620786"/>
    </disease>
    <text>The disease is caused by variants affecting the gene represented in this entry.</text>
</comment>
<comment type="miscellaneous">
    <molecule>Isoform 2</molecule>
    <text evidence="14">In placenta and leukocytes, expressed from the maternal allele, due to imprinting of the paternal allele.</text>
</comment>
<comment type="miscellaneous">
    <molecule>Isoform 3</molecule>
    <text evidence="14">Produced by alternative splicing.</text>
</comment>
<comment type="miscellaneous">
    <molecule>Isoform 4</molecule>
    <text evidence="14">Produced by alternative splicing.</text>
</comment>
<comment type="miscellaneous">
    <molecule>Isoform 5</molecule>
    <text evidence="14">Produced by alternative splicing.</text>
</comment>
<comment type="similarity">
    <text evidence="14">Belongs to the acetyltransferase family. NAA60 subfamily.</text>
</comment>
<comment type="caution">
    <text evidence="3 4 5">According to a report, displays histone acetyltransferase activity while localized in the Golgi apparatus (PubMed:21981917). May mediate acetylation of free histone H4 and promote nucleosome assembly (PubMed:21981917). Such results are however unclear in vivo and recent reports strongly suggest that it acts as a N-alpha-acetyltransferase that specifically targets N-terminal residues of transmembrane proteins (PubMed:21750686, PubMed:25732826).</text>
</comment>
<dbReference type="EC" id="2.3.1.259" evidence="5"/>
<dbReference type="EC" id="2.3.1.48" evidence="15"/>
<dbReference type="EMBL" id="AY358543">
    <property type="protein sequence ID" value="AAQ88907.1"/>
    <property type="molecule type" value="mRNA"/>
</dbReference>
<dbReference type="EMBL" id="AK024216">
    <property type="protein sequence ID" value="BAB14853.1"/>
    <property type="molecule type" value="mRNA"/>
</dbReference>
<dbReference type="EMBL" id="AK092005">
    <property type="protein sequence ID" value="BAG52462.1"/>
    <property type="molecule type" value="mRNA"/>
</dbReference>
<dbReference type="EMBL" id="AK297219">
    <property type="protein sequence ID" value="BAG59702.1"/>
    <property type="molecule type" value="mRNA"/>
</dbReference>
<dbReference type="EMBL" id="AK298566">
    <property type="protein sequence ID" value="BAG60760.1"/>
    <property type="molecule type" value="mRNA"/>
</dbReference>
<dbReference type="EMBL" id="AK302361">
    <property type="protein sequence ID" value="BAG63686.1"/>
    <property type="molecule type" value="mRNA"/>
</dbReference>
<dbReference type="EMBL" id="CR457324">
    <property type="protein sequence ID" value="CAG33605.1"/>
    <property type="molecule type" value="mRNA"/>
</dbReference>
<dbReference type="EMBL" id="AC004224">
    <property type="status" value="NOT_ANNOTATED_CDS"/>
    <property type="molecule type" value="Genomic_DNA"/>
</dbReference>
<dbReference type="EMBL" id="AC025283">
    <property type="status" value="NOT_ANNOTATED_CDS"/>
    <property type="molecule type" value="Genomic_DNA"/>
</dbReference>
<dbReference type="EMBL" id="CH471112">
    <property type="protein sequence ID" value="EAW85358.1"/>
    <property type="molecule type" value="Genomic_DNA"/>
</dbReference>
<dbReference type="EMBL" id="CH471112">
    <property type="protein sequence ID" value="EAW85359.1"/>
    <property type="molecule type" value="Genomic_DNA"/>
</dbReference>
<dbReference type="EMBL" id="CH471112">
    <property type="protein sequence ID" value="EAW85360.1"/>
    <property type="molecule type" value="Genomic_DNA"/>
</dbReference>
<dbReference type="EMBL" id="CH471112">
    <property type="protein sequence ID" value="EAW85361.1"/>
    <property type="molecule type" value="Genomic_DNA"/>
</dbReference>
<dbReference type="EMBL" id="CH471112">
    <property type="protein sequence ID" value="EAW85362.1"/>
    <property type="molecule type" value="Genomic_DNA"/>
</dbReference>
<dbReference type="EMBL" id="CH471112">
    <property type="protein sequence ID" value="EAW85363.1"/>
    <property type="molecule type" value="Genomic_DNA"/>
</dbReference>
<dbReference type="EMBL" id="CH471112">
    <property type="protein sequence ID" value="EAW85364.1"/>
    <property type="molecule type" value="Genomic_DNA"/>
</dbReference>
<dbReference type="EMBL" id="BC011267">
    <property type="protein sequence ID" value="AAH11267.1"/>
    <property type="molecule type" value="mRNA"/>
</dbReference>
<dbReference type="CCDS" id="CCDS45396.1">
    <molecule id="Q9H7X0-1"/>
</dbReference>
<dbReference type="CCDS" id="CCDS81937.1">
    <molecule id="Q9H7X0-2"/>
</dbReference>
<dbReference type="CCDS" id="CCDS81938.1">
    <molecule id="Q9H7X0-5"/>
</dbReference>
<dbReference type="CCDS" id="CCDS81939.1">
    <molecule id="Q9H7X0-4"/>
</dbReference>
<dbReference type="CCDS" id="CCDS81941.1">
    <molecule id="Q9H7X0-3"/>
</dbReference>
<dbReference type="RefSeq" id="NP_001077069.1">
    <molecule id="Q9H7X0-1"/>
    <property type="nucleotide sequence ID" value="NM_001083600.3"/>
</dbReference>
<dbReference type="RefSeq" id="NP_001077070.1">
    <molecule id="Q9H7X0-1"/>
    <property type="nucleotide sequence ID" value="NM_001083601.3"/>
</dbReference>
<dbReference type="RefSeq" id="NP_001304022.1">
    <molecule id="Q9H7X0-2"/>
    <property type="nucleotide sequence ID" value="NM_001317093.1"/>
</dbReference>
<dbReference type="RefSeq" id="NP_001304023.1">
    <property type="nucleotide sequence ID" value="NM_001317094.1"/>
</dbReference>
<dbReference type="RefSeq" id="NP_001304024.1">
    <molecule id="Q9H7X0-3"/>
    <property type="nucleotide sequence ID" value="NM_001317095.2"/>
</dbReference>
<dbReference type="RefSeq" id="NP_001304025.1">
    <molecule id="Q9H7X0-5"/>
    <property type="nucleotide sequence ID" value="NM_001317096.2"/>
</dbReference>
<dbReference type="RefSeq" id="NP_001304026.1">
    <molecule id="Q9H7X0-4"/>
    <property type="nucleotide sequence ID" value="NM_001317097.2"/>
</dbReference>
<dbReference type="RefSeq" id="NP_001304027.1">
    <molecule id="Q9H7X0-4"/>
    <property type="nucleotide sequence ID" value="NM_001317098.2"/>
</dbReference>
<dbReference type="RefSeq" id="NP_079121.1">
    <molecule id="Q9H7X0-1"/>
    <property type="nucleotide sequence ID" value="NM_024845.4"/>
</dbReference>
<dbReference type="PDB" id="5HGZ">
    <property type="method" value="X-ray"/>
    <property type="resolution" value="1.38 A"/>
    <property type="chains" value="A=4-242"/>
</dbReference>
<dbReference type="PDB" id="5HH0">
    <property type="method" value="X-ray"/>
    <property type="resolution" value="1.60 A"/>
    <property type="chains" value="A=4-199"/>
</dbReference>
<dbReference type="PDB" id="5HH1">
    <property type="method" value="X-ray"/>
    <property type="resolution" value="1.80 A"/>
    <property type="chains" value="A=4-199"/>
</dbReference>
<dbReference type="PDB" id="5ICV">
    <property type="method" value="X-ray"/>
    <property type="resolution" value="1.53 A"/>
    <property type="chains" value="A/B=5-184"/>
</dbReference>
<dbReference type="PDB" id="5ICW">
    <property type="method" value="X-ray"/>
    <property type="resolution" value="1.95 A"/>
    <property type="chains" value="A/B/C/D=3-184"/>
</dbReference>
<dbReference type="PDBsum" id="5HGZ"/>
<dbReference type="PDBsum" id="5HH0"/>
<dbReference type="PDBsum" id="5HH1"/>
<dbReference type="PDBsum" id="5ICV"/>
<dbReference type="PDBsum" id="5ICW"/>
<dbReference type="SMR" id="Q9H7X0"/>
<dbReference type="BioGRID" id="122986">
    <property type="interactions" value="47"/>
</dbReference>
<dbReference type="DIP" id="DIP-62077N"/>
<dbReference type="FunCoup" id="Q9H7X0">
    <property type="interactions" value="1077"/>
</dbReference>
<dbReference type="IntAct" id="Q9H7X0">
    <property type="interactions" value="6"/>
</dbReference>
<dbReference type="MINT" id="Q9H7X0"/>
<dbReference type="STRING" id="9606.ENSP00000401237"/>
<dbReference type="ChEMBL" id="CHEMBL4630856"/>
<dbReference type="iPTMnet" id="Q9H7X0"/>
<dbReference type="PhosphoSitePlus" id="Q9H7X0"/>
<dbReference type="SwissPalm" id="Q9H7X0"/>
<dbReference type="BioMuta" id="NAA60"/>
<dbReference type="DMDM" id="74733721"/>
<dbReference type="jPOST" id="Q9H7X0"/>
<dbReference type="MassIVE" id="Q9H7X0"/>
<dbReference type="PaxDb" id="9606-ENSP00000385903"/>
<dbReference type="PeptideAtlas" id="Q9H7X0"/>
<dbReference type="ProteomicsDB" id="17514"/>
<dbReference type="ProteomicsDB" id="5517"/>
<dbReference type="ProteomicsDB" id="81152">
    <molecule id="Q9H7X0-1"/>
</dbReference>
<dbReference type="Pumba" id="Q9H7X0"/>
<dbReference type="Antibodypedia" id="24137">
    <property type="antibodies" value="148 antibodies from 19 providers"/>
</dbReference>
<dbReference type="DNASU" id="79903"/>
<dbReference type="Ensembl" id="ENST00000360862.9">
    <molecule id="Q9H7X0-3"/>
    <property type="protein sequence ID" value="ENSP00000354108.5"/>
    <property type="gene ID" value="ENSG00000122390.19"/>
</dbReference>
<dbReference type="Ensembl" id="ENST00000407558.9">
    <molecule id="Q9H7X0-1"/>
    <property type="protein sequence ID" value="ENSP00000385903.4"/>
    <property type="gene ID" value="ENSG00000122390.19"/>
</dbReference>
<dbReference type="Ensembl" id="ENST00000414063.6">
    <molecule id="Q9H7X0-1"/>
    <property type="protein sequence ID" value="ENSP00000393224.2"/>
    <property type="gene ID" value="ENSG00000122390.19"/>
</dbReference>
<dbReference type="Ensembl" id="ENST00000421765.7">
    <molecule id="Q9H7X0-5"/>
    <property type="protein sequence ID" value="ENSP00000405873.3"/>
    <property type="gene ID" value="ENSG00000122390.19"/>
</dbReference>
<dbReference type="Ensembl" id="ENST00000424546.6">
    <molecule id="Q9H7X0-2"/>
    <property type="protein sequence ID" value="ENSP00000401237.2"/>
    <property type="gene ID" value="ENSG00000122390.19"/>
</dbReference>
<dbReference type="Ensembl" id="ENST00000570819.5">
    <molecule id="Q9H7X0-4"/>
    <property type="protein sequence ID" value="ENSP00000460763.1"/>
    <property type="gene ID" value="ENSG00000122390.19"/>
</dbReference>
<dbReference type="Ensembl" id="ENST00000572169.6">
    <molecule id="Q9H7X0-1"/>
    <property type="protein sequence ID" value="ENSP00000458928.2"/>
    <property type="gene ID" value="ENSG00000122390.19"/>
</dbReference>
<dbReference type="Ensembl" id="ENST00000572584.2">
    <molecule id="Q9H7X0-1"/>
    <property type="protein sequence ID" value="ENSP00000459057.1"/>
    <property type="gene ID" value="ENSG00000122390.19"/>
</dbReference>
<dbReference type="Ensembl" id="ENST00000572942.5">
    <molecule id="Q9H7X0-4"/>
    <property type="protein sequence ID" value="ENSP00000461730.1"/>
    <property type="gene ID" value="ENSG00000122390.19"/>
</dbReference>
<dbReference type="Ensembl" id="ENST00000573580.5">
    <molecule id="Q9H7X0-3"/>
    <property type="protein sequence ID" value="ENSP00000459055.1"/>
    <property type="gene ID" value="ENSG00000122390.19"/>
</dbReference>
<dbReference type="Ensembl" id="ENST00000575076.5">
    <molecule id="Q9H7X0-1"/>
    <property type="protein sequence ID" value="ENSP00000458667.1"/>
    <property type="gene ID" value="ENSG00000122390.19"/>
</dbReference>
<dbReference type="Ensembl" id="ENST00000577013.6">
    <molecule id="Q9H7X0-3"/>
    <property type="protein sequence ID" value="ENSP00000458575.2"/>
    <property type="gene ID" value="ENSG00000122390.19"/>
</dbReference>
<dbReference type="Ensembl" id="ENST00000649205.1">
    <molecule id="Q9H7X0-1"/>
    <property type="protein sequence ID" value="ENSP00000497988.1"/>
    <property type="gene ID" value="ENSG00000122390.19"/>
</dbReference>
<dbReference type="Ensembl" id="ENST00000649360.1">
    <molecule id="Q9H7X0-1"/>
    <property type="protein sequence ID" value="ENSP00000497411.1"/>
    <property type="gene ID" value="ENSG00000122390.19"/>
</dbReference>
<dbReference type="GeneID" id="79903"/>
<dbReference type="KEGG" id="hsa:79903"/>
<dbReference type="MANE-Select" id="ENST00000407558.9">
    <property type="protein sequence ID" value="ENSP00000385903.4"/>
    <property type="RefSeq nucleotide sequence ID" value="NM_001083601.3"/>
    <property type="RefSeq protein sequence ID" value="NP_001077070.1"/>
</dbReference>
<dbReference type="UCSC" id="uc002cvg.3">
    <molecule id="Q9H7X0-1"/>
    <property type="organism name" value="human"/>
</dbReference>
<dbReference type="AGR" id="HGNC:25875"/>
<dbReference type="CTD" id="79903"/>
<dbReference type="DisGeNET" id="79903"/>
<dbReference type="GeneCards" id="NAA60"/>
<dbReference type="HGNC" id="HGNC:25875">
    <property type="gene designation" value="NAA60"/>
</dbReference>
<dbReference type="HPA" id="ENSG00000122390">
    <property type="expression patterns" value="Low tissue specificity"/>
</dbReference>
<dbReference type="MalaCards" id="NAA60"/>
<dbReference type="MIM" id="614246">
    <property type="type" value="gene"/>
</dbReference>
<dbReference type="MIM" id="620786">
    <property type="type" value="phenotype"/>
</dbReference>
<dbReference type="neXtProt" id="NX_Q9H7X0"/>
<dbReference type="OpenTargets" id="ENSG00000122390"/>
<dbReference type="Orphanet" id="1980">
    <property type="disease" value="Bilateral striopallidodentate calcinosis"/>
</dbReference>
<dbReference type="PharmGKB" id="PA164723438"/>
<dbReference type="VEuPathDB" id="HostDB:ENSG00000122390"/>
<dbReference type="eggNOG" id="KOG3138">
    <property type="taxonomic scope" value="Eukaryota"/>
</dbReference>
<dbReference type="GeneTree" id="ENSGT00390000008314"/>
<dbReference type="HOGENOM" id="CLU_1427523_0_0_1"/>
<dbReference type="InParanoid" id="Q9H7X0"/>
<dbReference type="OMA" id="IHFYKKM"/>
<dbReference type="OrthoDB" id="47017at2759"/>
<dbReference type="PAN-GO" id="Q9H7X0">
    <property type="GO annotations" value="6 GO annotations based on evolutionary models"/>
</dbReference>
<dbReference type="PhylomeDB" id="Q9H7X0"/>
<dbReference type="TreeFam" id="TF323980"/>
<dbReference type="BioCyc" id="MetaCyc:ENSG00000122390-MONOMER"/>
<dbReference type="BRENDA" id="2.3.1.259">
    <property type="organism ID" value="2681"/>
</dbReference>
<dbReference type="PathwayCommons" id="Q9H7X0"/>
<dbReference type="SignaLink" id="Q9H7X0"/>
<dbReference type="BioGRID-ORCS" id="79903">
    <property type="hits" value="11 hits in 1166 CRISPR screens"/>
</dbReference>
<dbReference type="ChiTaRS" id="NAA60">
    <property type="organism name" value="human"/>
</dbReference>
<dbReference type="GenomeRNAi" id="79903"/>
<dbReference type="Pharos" id="Q9H7X0">
    <property type="development level" value="Tbio"/>
</dbReference>
<dbReference type="PRO" id="PR:Q9H7X0"/>
<dbReference type="Proteomes" id="UP000005640">
    <property type="component" value="Chromosome 16"/>
</dbReference>
<dbReference type="RNAct" id="Q9H7X0">
    <property type="molecule type" value="protein"/>
</dbReference>
<dbReference type="Bgee" id="ENSG00000122390">
    <property type="expression patterns" value="Expressed in pancreatic ductal cell and 198 other cell types or tissues"/>
</dbReference>
<dbReference type="ExpressionAtlas" id="Q9H7X0">
    <property type="expression patterns" value="baseline and differential"/>
</dbReference>
<dbReference type="GO" id="GO:0000139">
    <property type="term" value="C:Golgi membrane"/>
    <property type="evidence" value="ECO:0000314"/>
    <property type="project" value="UniProtKB"/>
</dbReference>
<dbReference type="GO" id="GO:0004402">
    <property type="term" value="F:histone acetyltransferase activity"/>
    <property type="evidence" value="ECO:0000318"/>
    <property type="project" value="GO_Central"/>
</dbReference>
<dbReference type="GO" id="GO:0010485">
    <property type="term" value="F:histone H4 acetyltransferase activity"/>
    <property type="evidence" value="ECO:0000314"/>
    <property type="project" value="UniProtKB"/>
</dbReference>
<dbReference type="GO" id="GO:0042803">
    <property type="term" value="F:protein homodimerization activity"/>
    <property type="evidence" value="ECO:0000314"/>
    <property type="project" value="UniProtKB"/>
</dbReference>
<dbReference type="GO" id="GO:0120518">
    <property type="term" value="F:protein N-terminal-methionine acetyltransferase activity"/>
    <property type="evidence" value="ECO:0007669"/>
    <property type="project" value="UniProtKB-EC"/>
</dbReference>
<dbReference type="GO" id="GO:0004596">
    <property type="term" value="F:protein-N-terminal amino-acid acetyltransferase activity"/>
    <property type="evidence" value="ECO:0000314"/>
    <property type="project" value="UniProtKB"/>
</dbReference>
<dbReference type="GO" id="GO:0008283">
    <property type="term" value="P:cell population proliferation"/>
    <property type="evidence" value="ECO:0000315"/>
    <property type="project" value="UniProtKB"/>
</dbReference>
<dbReference type="GO" id="GO:0007059">
    <property type="term" value="P:chromosome segregation"/>
    <property type="evidence" value="ECO:0000250"/>
    <property type="project" value="UniProtKB"/>
</dbReference>
<dbReference type="GO" id="GO:0017196">
    <property type="term" value="P:N-terminal peptidyl-methionine acetylation"/>
    <property type="evidence" value="ECO:0000314"/>
    <property type="project" value="UniProtKB"/>
</dbReference>
<dbReference type="GO" id="GO:0006474">
    <property type="term" value="P:N-terminal protein amino acid acetylation"/>
    <property type="evidence" value="ECO:0000314"/>
    <property type="project" value="UniProtKB"/>
</dbReference>
<dbReference type="GO" id="GO:0006334">
    <property type="term" value="P:nucleosome assembly"/>
    <property type="evidence" value="ECO:0000314"/>
    <property type="project" value="UniProtKB"/>
</dbReference>
<dbReference type="CDD" id="cd04301">
    <property type="entry name" value="NAT_SF"/>
    <property type="match status" value="1"/>
</dbReference>
<dbReference type="FunFam" id="3.40.630.30:FF:000028">
    <property type="entry name" value="N-alpha-acetyltransferase 60 isoform X1"/>
    <property type="match status" value="1"/>
</dbReference>
<dbReference type="Gene3D" id="3.40.630.30">
    <property type="match status" value="1"/>
</dbReference>
<dbReference type="InterPro" id="IPR016181">
    <property type="entry name" value="Acyl_CoA_acyltransferase"/>
</dbReference>
<dbReference type="InterPro" id="IPR000182">
    <property type="entry name" value="GNAT_dom"/>
</dbReference>
<dbReference type="InterPro" id="IPR045141">
    <property type="entry name" value="NAA60-like"/>
</dbReference>
<dbReference type="PANTHER" id="PTHR14744">
    <property type="entry name" value="N-ALPHA-ACETYLTRANSFERASE 60"/>
    <property type="match status" value="1"/>
</dbReference>
<dbReference type="PANTHER" id="PTHR14744:SF15">
    <property type="entry name" value="N-ALPHA-ACETYLTRANSFERASE 60"/>
    <property type="match status" value="1"/>
</dbReference>
<dbReference type="Pfam" id="PF00583">
    <property type="entry name" value="Acetyltransf_1"/>
    <property type="match status" value="1"/>
</dbReference>
<dbReference type="SUPFAM" id="SSF55729">
    <property type="entry name" value="Acyl-CoA N-acyltransferases (Nat)"/>
    <property type="match status" value="1"/>
</dbReference>
<dbReference type="PROSITE" id="PS51186">
    <property type="entry name" value="GNAT"/>
    <property type="match status" value="1"/>
</dbReference>